<protein>
    <recommendedName>
        <fullName>SH3 and multiple ankyrin repeat domains protein 3</fullName>
        <shortName>Shank3</shortName>
    </recommendedName>
    <alternativeName>
        <fullName>Proline-rich synapse-associated protein 2</fullName>
        <shortName>ProSAP2</shortName>
    </alternativeName>
</protein>
<evidence type="ECO:0000250" key="1"/>
<evidence type="ECO:0000250" key="2">
    <source>
        <dbReference type="UniProtKB" id="Q4ACU6"/>
    </source>
</evidence>
<evidence type="ECO:0000250" key="3">
    <source>
        <dbReference type="UniProtKB" id="Q9JLU4"/>
    </source>
</evidence>
<evidence type="ECO:0000255" key="4"/>
<evidence type="ECO:0000255" key="5">
    <source>
        <dbReference type="PROSITE-ProRule" id="PRU00143"/>
    </source>
</evidence>
<evidence type="ECO:0000255" key="6">
    <source>
        <dbReference type="PROSITE-ProRule" id="PRU00184"/>
    </source>
</evidence>
<evidence type="ECO:0000255" key="7">
    <source>
        <dbReference type="PROSITE-ProRule" id="PRU00192"/>
    </source>
</evidence>
<evidence type="ECO:0000256" key="8">
    <source>
        <dbReference type="SAM" id="MobiDB-lite"/>
    </source>
</evidence>
<evidence type="ECO:0000269" key="9">
    <source>
    </source>
</evidence>
<evidence type="ECO:0000269" key="10">
    <source>
    </source>
</evidence>
<evidence type="ECO:0000269" key="11">
    <source>
    </source>
</evidence>
<evidence type="ECO:0000269" key="12">
    <source>
    </source>
</evidence>
<evidence type="ECO:0000269" key="13">
    <source>
    </source>
</evidence>
<evidence type="ECO:0000269" key="14">
    <source>
    </source>
</evidence>
<evidence type="ECO:0000269" key="15">
    <source>
    </source>
</evidence>
<evidence type="ECO:0000269" key="16">
    <source>
    </source>
</evidence>
<evidence type="ECO:0000269" key="17">
    <source>
    </source>
</evidence>
<evidence type="ECO:0000305" key="18"/>
<evidence type="ECO:0007744" key="19">
    <source>
    </source>
</evidence>
<evidence type="ECO:0007744" key="20">
    <source>
    </source>
</evidence>
<evidence type="ECO:0007744" key="21">
    <source>
    </source>
</evidence>
<evidence type="ECO:0007829" key="22">
    <source>
        <dbReference type="PDB" id="6CPK"/>
    </source>
</evidence>
<evidence type="ECO:0007829" key="23">
    <source>
        <dbReference type="PDB" id="7C7I"/>
    </source>
</evidence>
<evidence type="ECO:0007829" key="24">
    <source>
        <dbReference type="PDB" id="7C7J"/>
    </source>
</evidence>
<proteinExistence type="evidence at protein level"/>
<feature type="chain" id="PRO_0000174675" description="SH3 and multiple ankyrin repeat domains protein 3">
    <location>
        <begin position="1"/>
        <end position="1806"/>
    </location>
</feature>
<feature type="repeat" description="ANK 1">
    <location>
        <begin position="223"/>
        <end position="253"/>
    </location>
</feature>
<feature type="repeat" description="ANK 2">
    <location>
        <begin position="257"/>
        <end position="286"/>
    </location>
</feature>
<feature type="repeat" description="ANK 3">
    <location>
        <begin position="290"/>
        <end position="320"/>
    </location>
</feature>
<feature type="repeat" description="ANK 4">
    <location>
        <begin position="324"/>
        <end position="353"/>
    </location>
</feature>
<feature type="repeat" description="ANK 5">
    <location>
        <begin position="357"/>
        <end position="386"/>
    </location>
</feature>
<feature type="repeat" description="ANK 6">
    <location>
        <begin position="390"/>
        <end position="420"/>
    </location>
</feature>
<feature type="domain" description="SH3" evidence="7">
    <location>
        <begin position="546"/>
        <end position="605"/>
    </location>
</feature>
<feature type="domain" description="PDZ" evidence="5">
    <location>
        <begin position="646"/>
        <end position="740"/>
    </location>
</feature>
<feature type="domain" description="SAM" evidence="6">
    <location>
        <begin position="1743"/>
        <end position="1806"/>
    </location>
</feature>
<feature type="region of interest" description="Intramolecular interaction with the ANK repeats" evidence="1">
    <location>
        <begin position="76"/>
        <end position="150"/>
    </location>
</feature>
<feature type="region of interest" description="Disordered" evidence="8">
    <location>
        <begin position="407"/>
        <end position="467"/>
    </location>
</feature>
<feature type="region of interest" description="Disordered" evidence="8">
    <location>
        <begin position="665"/>
        <end position="689"/>
    </location>
</feature>
<feature type="region of interest" description="Required for interaction with ABI1" evidence="1">
    <location>
        <begin position="753"/>
        <end position="760"/>
    </location>
</feature>
<feature type="region of interest" description="Disordered" evidence="8">
    <location>
        <begin position="760"/>
        <end position="853"/>
    </location>
</feature>
<feature type="region of interest" description="Disordered" evidence="8">
    <location>
        <begin position="871"/>
        <end position="1021"/>
    </location>
</feature>
<feature type="region of interest" description="Disordered" evidence="8">
    <location>
        <begin position="1115"/>
        <end position="1460"/>
    </location>
</feature>
<feature type="region of interest" description="Disordered" evidence="8">
    <location>
        <begin position="1475"/>
        <end position="1525"/>
    </location>
</feature>
<feature type="region of interest" description="Disordered" evidence="8">
    <location>
        <begin position="1546"/>
        <end position="1584"/>
    </location>
</feature>
<feature type="region of interest" description="Disordered" evidence="8">
    <location>
        <begin position="1627"/>
        <end position="1664"/>
    </location>
</feature>
<feature type="coiled-coil region" evidence="4">
    <location>
        <begin position="1569"/>
        <end position="1589"/>
    </location>
</feature>
<feature type="short sequence motif" description="SH3-binding" evidence="4">
    <location>
        <begin position="1485"/>
        <end position="1491"/>
    </location>
</feature>
<feature type="compositionally biased region" description="Basic and acidic residues" evidence="8">
    <location>
        <begin position="407"/>
        <end position="416"/>
    </location>
</feature>
<feature type="compositionally biased region" description="Pro residues" evidence="8">
    <location>
        <begin position="439"/>
        <end position="461"/>
    </location>
</feature>
<feature type="compositionally biased region" description="Pro residues" evidence="8">
    <location>
        <begin position="813"/>
        <end position="845"/>
    </location>
</feature>
<feature type="compositionally biased region" description="Pro residues" evidence="8">
    <location>
        <begin position="906"/>
        <end position="915"/>
    </location>
</feature>
<feature type="compositionally biased region" description="Gly residues" evidence="8">
    <location>
        <begin position="993"/>
        <end position="1013"/>
    </location>
</feature>
<feature type="compositionally biased region" description="Low complexity" evidence="8">
    <location>
        <begin position="1115"/>
        <end position="1124"/>
    </location>
</feature>
<feature type="compositionally biased region" description="Basic and acidic residues" evidence="8">
    <location>
        <begin position="1173"/>
        <end position="1193"/>
    </location>
</feature>
<feature type="compositionally biased region" description="Pro residues" evidence="8">
    <location>
        <begin position="1251"/>
        <end position="1261"/>
    </location>
</feature>
<feature type="compositionally biased region" description="Basic and acidic residues" evidence="8">
    <location>
        <begin position="1360"/>
        <end position="1370"/>
    </location>
</feature>
<feature type="compositionally biased region" description="Low complexity" evidence="8">
    <location>
        <begin position="1371"/>
        <end position="1392"/>
    </location>
</feature>
<feature type="compositionally biased region" description="Low complexity" evidence="8">
    <location>
        <begin position="1444"/>
        <end position="1460"/>
    </location>
</feature>
<feature type="compositionally biased region" description="Polar residues" evidence="8">
    <location>
        <begin position="1495"/>
        <end position="1505"/>
    </location>
</feature>
<feature type="compositionally biased region" description="Low complexity" evidence="8">
    <location>
        <begin position="1627"/>
        <end position="1637"/>
    </location>
</feature>
<feature type="compositionally biased region" description="Pro residues" evidence="8">
    <location>
        <begin position="1638"/>
        <end position="1657"/>
    </location>
</feature>
<feature type="modified residue" description="Phosphotyrosine" evidence="2">
    <location>
        <position position="197"/>
    </location>
</feature>
<feature type="modified residue" description="Phosphoserine" evidence="2">
    <location>
        <position position="448"/>
    </location>
</feature>
<feature type="modified residue" description="Phosphoserine" evidence="2">
    <location>
        <position position="450"/>
    </location>
</feature>
<feature type="modified residue" description="Phosphoserine" evidence="2">
    <location>
        <position position="463"/>
    </location>
</feature>
<feature type="modified residue" description="Phosphoserine" evidence="3">
    <location>
        <position position="470"/>
    </location>
</feature>
<feature type="modified residue" description="Phosphoserine" evidence="2">
    <location>
        <position position="558"/>
    </location>
</feature>
<feature type="modified residue" description="Phosphotyrosine" evidence="2">
    <location>
        <position position="631"/>
    </location>
</feature>
<feature type="modified residue" description="Phosphoserine" evidence="2">
    <location>
        <position position="770"/>
    </location>
</feature>
<feature type="modified residue" description="Phosphoserine" evidence="2">
    <location>
        <position position="857"/>
    </location>
</feature>
<feature type="modified residue" description="Phosphoserine" evidence="2">
    <location>
        <position position="866"/>
    </location>
</feature>
<feature type="modified residue" description="Phosphoserine" evidence="2">
    <location>
        <position position="877"/>
    </location>
</feature>
<feature type="modified residue" description="Phosphoserine" evidence="2">
    <location>
        <position position="966"/>
    </location>
</feature>
<feature type="modified residue" description="Phosphoserine" evidence="2">
    <location>
        <position position="973"/>
    </location>
</feature>
<feature type="modified residue" description="Phosphothreonine" evidence="21">
    <location>
        <position position="988"/>
    </location>
</feature>
<feature type="modified residue" description="Phosphotyrosine" evidence="3">
    <location>
        <position position="1006"/>
    </location>
</feature>
<feature type="modified residue" description="Asymmetric dimethylarginine" evidence="2">
    <location>
        <position position="1041"/>
    </location>
</feature>
<feature type="modified residue" description="Phosphothreonine" evidence="2">
    <location>
        <position position="1204"/>
    </location>
</feature>
<feature type="modified residue" description="Phosphoserine" evidence="2">
    <location>
        <position position="1208"/>
    </location>
</feature>
<feature type="modified residue" description="Phosphoserine" evidence="19">
    <location>
        <position position="1233"/>
    </location>
</feature>
<feature type="modified residue" description="Phosphoserine" evidence="19">
    <location>
        <position position="1237"/>
    </location>
</feature>
<feature type="modified residue" description="Phosphoserine" evidence="2">
    <location>
        <position position="1240"/>
    </location>
</feature>
<feature type="modified residue" description="Phosphothreonine" evidence="20 21">
    <location>
        <position position="1309"/>
    </location>
</feature>
<feature type="modified residue" description="Phosphoserine" evidence="20 21">
    <location>
        <position position="1328"/>
    </location>
</feature>
<feature type="modified residue" description="Phosphoserine" evidence="3">
    <location>
        <position position="1495"/>
    </location>
</feature>
<feature type="modified residue" description="Phosphoserine" evidence="2">
    <location>
        <position position="1585"/>
    </location>
</feature>
<feature type="modified residue" description="Phosphoserine" evidence="2">
    <location>
        <position position="1596"/>
    </location>
</feature>
<feature type="modified residue" description="Phosphoserine" evidence="2">
    <location>
        <position position="1604"/>
    </location>
</feature>
<feature type="modified residue" description="Phosphoserine" evidence="2">
    <location>
        <position position="1614"/>
    </location>
</feature>
<feature type="modified residue" description="Phosphoserine" evidence="2">
    <location>
        <position position="1709"/>
    </location>
</feature>
<feature type="modified residue" description="Phosphoserine" evidence="21">
    <location>
        <position position="1711"/>
    </location>
</feature>
<feature type="modified residue" description="Phosphoserine" evidence="21">
    <location>
        <position position="1713"/>
    </location>
</feature>
<feature type="splice variant" id="VSP_053605" description="In isoform 2." evidence="18">
    <location>
        <begin position="76"/>
        <end position="194"/>
    </location>
</feature>
<feature type="sequence variant" id="VAR_032804" description="Found in patients with neuropsychiatric disorders; uncertain significance; disrupts synaptic localization; dbSNP:rs1336089966." evidence="10">
    <original>R</original>
    <variation>C</variation>
    <location>
        <position position="87"/>
    </location>
</feature>
<feature type="sequence variant" id="VAR_070259" description="In PHMDS; dbSNP:rs397514705." evidence="13">
    <original>P</original>
    <variation>A</variation>
    <location>
        <position position="216"/>
    </location>
</feature>
<feature type="sequence variant" id="VAR_032805" description="In dbSNP:rs1232069989." evidence="10">
    <original>A</original>
    <variation>G</variation>
    <location>
        <position position="273"/>
    </location>
</feature>
<feature type="sequence variant" id="VAR_032806" description="In dbSNP:rs766856815." evidence="10">
    <original>A</original>
    <variation>T</variation>
    <location>
        <position position="299"/>
    </location>
</feature>
<feature type="sequence variant" id="VAR_032807" description="In dbSNP:rs9616915." evidence="12">
    <original>I</original>
    <variation>T</variation>
    <location>
        <position position="320"/>
    </location>
</feature>
<feature type="sequence variant" id="VAR_032808" description="Found in patients with neuropsychiatric disorders; uncertain significance; disrupts synaptic localization; dbSNP:rs376862893." evidence="10">
    <original>R</original>
    <variation>C</variation>
    <location>
        <position position="375"/>
    </location>
</feature>
<feature type="sequence variant" id="VAR_070260" description="Found in a patient with neuropsychiatric disorders; uncertain significance." evidence="11">
    <original>Q</original>
    <variation>R</variation>
    <location>
        <position position="396"/>
    </location>
</feature>
<feature type="sequence variant" id="VAR_070261" description="Found in patient with neuropsychiatric disorders; uncertain significance; dbSNP:rs1314696433." evidence="11">
    <original>S</original>
    <variation>L</variation>
    <location>
        <position position="416"/>
    </location>
</feature>
<feature type="sequence variant" id="VAR_065799" evidence="12">
    <original>H</original>
    <variation>Q</variation>
    <location>
        <position position="568"/>
    </location>
</feature>
<feature type="sequence variant" id="VAR_065800" description="In SCZD15; dbSNP:rs387906933." evidence="12">
    <original>R</original>
    <variation>W</variation>
    <location>
        <position position="611"/>
    </location>
</feature>
<feature type="sequence variant" id="VAR_065801" evidence="12">
    <original>A</original>
    <variation>T</variation>
    <location>
        <position position="795"/>
    </location>
</feature>
<feature type="sequence variant" id="VAR_065802" description="In dbSNP:rs1340094921." evidence="12">
    <original>S</original>
    <variation>T</variation>
    <location>
        <position position="1027"/>
    </location>
</feature>
<feature type="sequence variant" id="VAR_070262" evidence="10">
    <original>A</original>
    <variation>G</variation>
    <location>
        <position position="1038"/>
    </location>
</feature>
<feature type="sequence variant" id="VAR_070263" description="Found in a patient with neuropsychiatric disorders; uncertain significance; dbSNP:rs530255181." evidence="11">
    <original>A</original>
    <variation>S</variation>
    <location>
        <position position="1045"/>
    </location>
</feature>
<feature type="sequence variant" id="VAR_065803" evidence="12">
    <original>G</original>
    <variation>V</variation>
    <location>
        <position position="1085"/>
    </location>
</feature>
<feature type="sequence variant" id="VAR_070264" description="In dbSNP:rs767058690." evidence="10">
    <original>G</original>
    <variation>V</variation>
    <location>
        <position position="1086"/>
    </location>
</feature>
<feature type="sequence variant" id="VAR_065804" description="In dbSNP:rs769454362.">
    <original>P</original>
    <variation>H</variation>
    <location>
        <position position="1209"/>
    </location>
</feature>
<feature type="sequence variant" id="VAR_070265" description="Found in a patient with neuropsychiatric disorders; uncertain significance; dbSNP:rs139686326." evidence="11">
    <original>A</original>
    <variation>T</variation>
    <location>
        <position position="1248"/>
    </location>
</feature>
<feature type="sequence variant" id="VAR_070266" description="In dbSNP:rs750186589." evidence="10">
    <original>R</original>
    <variation>H</variation>
    <location>
        <position position="1306"/>
    </location>
</feature>
<feature type="sequence variant" id="VAR_070267" description="Found in a patient with neuropsychiatric disorders; uncertain significance; dbSNP:rs757572910." evidence="11">
    <original>P</original>
    <variation>L</variation>
    <location>
        <position position="1338"/>
    </location>
</feature>
<feature type="sequence variant" id="VAR_065805" description="In dbSNP:rs201483867." evidence="12">
    <original>R</original>
    <variation>K</variation>
    <location>
        <position position="1373"/>
    </location>
</feature>
<feature type="sequence variant" id="VAR_065806" description="In dbSNP:rs200087210." evidence="12">
    <original>V</original>
    <variation>G</variation>
    <location>
        <position position="1408"/>
    </location>
</feature>
<feature type="sequence variant" id="VAR_070268" description="Found in a patient with neuropsychiatric disorders; uncertain significance; dbSNP:rs201973139." evidence="11">
    <original>L</original>
    <variation>V</variation>
    <location>
        <position position="1481"/>
    </location>
</feature>
<feature type="sequence variant" id="VAR_070269" description="Found in a patient with neuropsychiatric disorders; uncertain significance; dbSNP:rs773395828." evidence="11">
    <original>M</original>
    <variation>T</variation>
    <location>
        <position position="1518"/>
    </location>
</feature>
<feature type="sequence variant" id="VAR_070270" description="In PHMDS." evidence="13">
    <original>A</original>
    <variation>S</variation>
    <location>
        <position position="1527"/>
    </location>
</feature>
<feature type="sequence variant" id="VAR_065807" description="In dbSNP:rs1389307970." evidence="12">
    <original>I</original>
    <variation>V</variation>
    <location>
        <position position="1621"/>
    </location>
</feature>
<feature type="sequence variant" id="VAR_070271" description="Found in a patient with neuropsychiatric disorders; uncertain significance; dbSNP:rs1224063430." evidence="11">
    <original>G</original>
    <variation>S</variation>
    <location>
        <position position="1632"/>
    </location>
</feature>
<feature type="sequence variant" id="VAR_070272" description="In dbSNP:rs1481014682." evidence="10">
    <original>S</original>
    <variation>G</variation>
    <location>
        <position position="1641"/>
    </location>
</feature>
<feature type="sequence variant" id="VAR_065808" evidence="12">
    <original>P</original>
    <variation>T</variation>
    <location>
        <position position="1720"/>
    </location>
</feature>
<feature type="sequence variant" id="VAR_070273" description="Found in patients with neuropsychiatric disorders; uncertain significance; dbSNP:rs749130556." evidence="10 11">
    <original>P</original>
    <variation>T</variation>
    <location>
        <position position="1729"/>
    </location>
</feature>
<feature type="strand" evidence="23">
    <location>
        <begin position="84"/>
        <end position="90"/>
    </location>
</feature>
<feature type="helix" evidence="23">
    <location>
        <begin position="91"/>
        <end position="93"/>
    </location>
</feature>
<feature type="strand" evidence="23">
    <location>
        <begin position="95"/>
        <end position="101"/>
    </location>
</feature>
<feature type="helix" evidence="23">
    <location>
        <begin position="107"/>
        <end position="117"/>
    </location>
</feature>
<feature type="turn" evidence="23">
    <location>
        <begin position="118"/>
        <end position="120"/>
    </location>
</feature>
<feature type="helix" evidence="23">
    <location>
        <begin position="125"/>
        <end position="127"/>
    </location>
</feature>
<feature type="strand" evidence="23">
    <location>
        <begin position="128"/>
        <end position="132"/>
    </location>
</feature>
<feature type="strand" evidence="24">
    <location>
        <begin position="145"/>
        <end position="148"/>
    </location>
</feature>
<feature type="helix" evidence="23">
    <location>
        <begin position="149"/>
        <end position="151"/>
    </location>
</feature>
<feature type="strand" evidence="23">
    <location>
        <begin position="156"/>
        <end position="160"/>
    </location>
</feature>
<feature type="strand" evidence="23">
    <location>
        <begin position="162"/>
        <end position="167"/>
    </location>
</feature>
<feature type="strand" evidence="22">
    <location>
        <begin position="551"/>
        <end position="553"/>
    </location>
</feature>
<feature type="strand" evidence="22">
    <location>
        <begin position="561"/>
        <end position="564"/>
    </location>
</feature>
<feature type="strand" evidence="22">
    <location>
        <begin position="572"/>
        <end position="578"/>
    </location>
</feature>
<feature type="strand" evidence="22">
    <location>
        <begin position="580"/>
        <end position="588"/>
    </location>
</feature>
<feature type="strand" evidence="22">
    <location>
        <begin position="591"/>
        <end position="596"/>
    </location>
</feature>
<feature type="helix" evidence="22">
    <location>
        <begin position="597"/>
        <end position="599"/>
    </location>
</feature>
<feature type="strand" evidence="22">
    <location>
        <begin position="600"/>
        <end position="602"/>
    </location>
</feature>
<organism>
    <name type="scientific">Homo sapiens</name>
    <name type="common">Human</name>
    <dbReference type="NCBI Taxonomy" id="9606"/>
    <lineage>
        <taxon>Eukaryota</taxon>
        <taxon>Metazoa</taxon>
        <taxon>Chordata</taxon>
        <taxon>Craniata</taxon>
        <taxon>Vertebrata</taxon>
        <taxon>Euteleostomi</taxon>
        <taxon>Mammalia</taxon>
        <taxon>Eutheria</taxon>
        <taxon>Euarchontoglires</taxon>
        <taxon>Primates</taxon>
        <taxon>Haplorrhini</taxon>
        <taxon>Catarrhini</taxon>
        <taxon>Hominidae</taxon>
        <taxon>Homo</taxon>
    </lineage>
</organism>
<comment type="function">
    <text evidence="15">Major scaffold postsynaptic density protein which interacts with multiple proteins and complexes to orchestrate the dendritic spine and synapse formation, maturation and maintenance. Interconnects receptors of the postsynaptic membrane including NMDA-type and metabotropic glutamate receptors via complexes with GKAP/PSD-95 and HOMER, respectively, and the actin-based cytoskeleton. Plays a role in the structural and functional organization of the dendritic spine and synaptic junction through the interaction with Arp2/3 and WAVE1 complex as well as the promotion of the F-actin clusters. By way of this control of actin dynamics, participates in the regulation of developing neurons growth cone motility and the NMDA receptor-signaling. Also modulates GRIA1 exocytosis and GRM5/MGLUR5 expression and signaling to control the AMPA and metabotropic glutamate receptor-mediated synaptic transmission and plasticity. May be required at an early stage of synapse formation and be inhibited by IGF1 to promote synapse maturation.</text>
</comment>
<comment type="subunit">
    <text evidence="2 3 17">May homomultimerize via its SAM domain. Interacts with BAIAP2, DBNL and SLC17A7/VGLUT1. Interacts with DLGAP1/GKAP, GRM1/MGLUR1, GRM5/MGLUR5 and LZTS3 C-termini via its PDZ domain. Interacts with ABI1, HOMER1, HOMER2, HOMER3 and CTTN/cortactin SH3 domain. Is part of a complex with DLG4/PSD-95 and DLGAP1/GKAP. Interacts (via PDZ domain) with the GRIA1 subunit of the AMPA receptor (via PDZ-binding motif). Interacts with WASF1 and CYFIP2; the interactions mediate the association of SHANK3 with the WAVE1 complex. Interacts with ARPC2; the interaction probably mediates the association of SHANK3 with the Arp2/3 complex. Interacts (via ANK repeats) with SHARPIN and SPTAN1. Interacts (via PDZ domain) with ARHGAP44 (probably via PDZ-binding motif); the interaction takes place in dendritic spines and promotes GRIA1 exocytosis (By similarity). Interacts with CAMK2A (PubMed:28130356). Interacts with DIP2A (By similarity). Interacts with ADGRL3 (By similarity).</text>
</comment>
<comment type="interaction">
    <interactant intactId="EBI-1752330">
        <id>Q9BYB0</id>
    </interactant>
    <interactant intactId="EBI-351710">
        <id>P12814</id>
        <label>ACTN1</label>
    </interactant>
    <organismsDiffer>false</organismsDiffer>
    <experiments>2</experiments>
</comment>
<comment type="interaction">
    <interactant intactId="EBI-1752330">
        <id>Q9BYB0</id>
    </interactant>
    <interactant intactId="EBI-717515">
        <id>Q14155</id>
        <label>ARHGEF7</label>
    </interactant>
    <organismsDiffer>false</organismsDiffer>
    <experiments>2</experiments>
</comment>
<comment type="interaction">
    <interactant intactId="EBI-1752330">
        <id>Q9BYB0</id>
    </interactant>
    <interactant intactId="EBI-743375">
        <id>Q9NX63</id>
        <label>CHCHD3</label>
    </interactant>
    <organismsDiffer>false</organismsDiffer>
    <experiments>2</experiments>
</comment>
<comment type="interaction">
    <interactant intactId="EBI-1752330">
        <id>Q9BYB0</id>
    </interactant>
    <interactant intactId="EBI-1104711">
        <id>Q16555</id>
        <label>DPYSL2</label>
    </interactant>
    <organismsDiffer>false</organismsDiffer>
    <experiments>2</experiments>
</comment>
<comment type="interaction">
    <interactant intactId="EBI-1752330">
        <id>Q9BYB0</id>
    </interactant>
    <interactant intactId="EBI-366632">
        <id>O75821</id>
        <label>EIF3G</label>
    </interactant>
    <organismsDiffer>false</organismsDiffer>
    <experiments>2</experiments>
</comment>
<comment type="interaction">
    <interactant intactId="EBI-1752330">
        <id>Q9BYB0</id>
    </interactant>
    <interactant intactId="EBI-350432">
        <id>P21333</id>
        <label>FLNA</label>
    </interactant>
    <organismsDiffer>false</organismsDiffer>
    <experiments>2</experiments>
</comment>
<comment type="interaction">
    <interactant intactId="EBI-1752330">
        <id>Q9BYB0</id>
    </interactant>
    <interactant intactId="EBI-401755">
        <id>P62993</id>
        <label>GRB2</label>
    </interactant>
    <organismsDiffer>false</organismsDiffer>
    <experiments>2</experiments>
</comment>
<comment type="interaction">
    <interactant intactId="EBI-1752330">
        <id>Q9BYB0</id>
    </interactant>
    <interactant intactId="EBI-357966">
        <id>P07910</id>
        <label>HNRNPC</label>
    </interactant>
    <organismsDiffer>false</organismsDiffer>
    <experiments>2</experiments>
</comment>
<comment type="interaction">
    <interactant intactId="EBI-1752330">
        <id>Q9BYB0</id>
    </interactant>
    <interactant intactId="EBI-722504">
        <id>O75525</id>
        <label>KHDRBS3</label>
    </interactant>
    <organismsDiffer>false</organismsDiffer>
    <experiments>3</experiments>
</comment>
<comment type="interaction">
    <interactant intactId="EBI-1752330">
        <id>Q9BYB0</id>
    </interactant>
    <interactant intactId="EBI-929047">
        <id>P78559</id>
        <label>MAP1A</label>
    </interactant>
    <organismsDiffer>false</organismsDiffer>
    <experiments>2</experiments>
</comment>
<comment type="interaction">
    <interactant intactId="EBI-1752330">
        <id>Q9BYB0</id>
    </interactant>
    <interactant intactId="EBI-389883">
        <id>P16333</id>
        <label>NCK1</label>
    </interactant>
    <organismsDiffer>false</organismsDiffer>
    <experiments>4</experiments>
</comment>
<comment type="interaction">
    <interactant intactId="EBI-1752330">
        <id>Q9BYB0</id>
    </interactant>
    <interactant intactId="EBI-946274">
        <id>Q99435</id>
        <label>NELL2</label>
    </interactant>
    <organismsDiffer>false</organismsDiffer>
    <experiments>2</experiments>
</comment>
<comment type="interaction">
    <interactant intactId="EBI-1752330">
        <id>Q9BYB0</id>
    </interactant>
    <interactant intactId="EBI-79165">
        <id>Q9NRD5</id>
        <label>PICK1</label>
    </interactant>
    <organismsDiffer>false</organismsDiffer>
    <experiments>2</experiments>
</comment>
<comment type="interaction">
    <interactant intactId="EBI-1752330">
        <id>Q9BYB0</id>
    </interactant>
    <interactant intactId="EBI-79387">
        <id>P19174</id>
        <label>PLCG1</label>
    </interactant>
    <organismsDiffer>false</organismsDiffer>
    <experiments>2</experiments>
</comment>
<comment type="interaction">
    <interactant intactId="EBI-1752330">
        <id>Q9BYB0</id>
    </interactant>
    <interactant intactId="EBI-78458">
        <id>P55345</id>
        <label>PRMT2</label>
    </interactant>
    <organismsDiffer>false</organismsDiffer>
    <experiments>4</experiments>
</comment>
<comment type="interaction">
    <interactant intactId="EBI-1752330">
        <id>Q9BYB0</id>
    </interactant>
    <interactant intactId="EBI-359318">
        <id>P55036</id>
        <label>PSMD4</label>
    </interactant>
    <organismsDiffer>false</organismsDiffer>
    <experiments>2</experiments>
</comment>
<comment type="interaction">
    <interactant intactId="EBI-1752330">
        <id>Q9BYB0</id>
    </interactant>
    <interactant intactId="EBI-477232">
        <id>Q8IXJ6</id>
        <label>SIRT2</label>
    </interactant>
    <organismsDiffer>false</organismsDiffer>
    <experiments>2</experiments>
</comment>
<comment type="interaction">
    <interactant intactId="EBI-20939234">
        <id>Q9BYB0-1</id>
    </interactant>
    <interactant intactId="EBI-9207771">
        <id>Q01668</id>
        <label>CACNA1D</label>
    </interactant>
    <organismsDiffer>false</organismsDiffer>
    <experiments>2</experiments>
</comment>
<comment type="subcellular location">
    <subcellularLocation>
        <location evidence="15">Cytoplasm</location>
    </subcellularLocation>
    <subcellularLocation>
        <location evidence="15">Postsynaptic density</location>
    </subcellularLocation>
    <subcellularLocation>
        <location evidence="1">Cell projection</location>
        <location evidence="1">Dendritic spine</location>
    </subcellularLocation>
    <text evidence="1">In neuronal cells, extends into the region subjacent to the postsynaptic density (PSD).</text>
</comment>
<comment type="alternative products">
    <event type="alternative promoter"/>
    <isoform>
        <id>Q9BYB0-1</id>
        <name>1</name>
        <name>A</name>
        <sequence type="displayed"/>
    </isoform>
    <isoform>
        <id>Q9BYB0-3</id>
        <name>2</name>
        <name>B</name>
        <sequence type="described" ref="VSP_053605"/>
    </isoform>
    <text>Additional isoforms seem to exist. These isoforms may be the product of multiple intragenic promoter and/or alternative splicing.</text>
</comment>
<comment type="tissue specificity">
    <text>Expressed in the cerebral cortex and the cerebellum.</text>
</comment>
<comment type="domain">
    <text evidence="1">In isoform 1, the N-terminal region preceding the ANK repeats interacts with the 6 ANK repeats in an intramolecular manner, thereby restricting access to ligands, such as SHARPIN and SPTAN1.</text>
</comment>
<comment type="disease">
    <text evidence="9">A chromosomal aberration involving SHANK3 is found in patients with chromosome 22q13.3 deletion syndrome. Translocation t(12;22)(q24.1;q13.3) with APPL2/DIP13B.</text>
</comment>
<comment type="disease">
    <text evidence="16">Defects in SHANK3 are associated with neuropsychiatric disorders such as autism spectrum disorders (ASD), bipolar affective disorders and early dementia onset. ASD are characterized by impairments in reciprocal social interaction and communication as well as restricted and stereotyped patterns of interest and activities. ASD include forms with moderate to severe cognitive impairment and milder forms with higher cognitive ability (Asperger syndrome). Gene duplication is associated with hyperkinetic neuropsychiatric disorders (PubMed:24153177) such as hyperactivity, auditory overstimulation, epilepsy and bipolar affective disorders, among others.</text>
</comment>
<comment type="disease" evidence="13 14 15">
    <disease id="DI-03945">
        <name>Phelan-McDermid syndrome</name>
        <acronym>PHMDS</acronym>
        <description>A developmental disorder with variable features. Common features include neonatal hypotonia, global developmental delay, normal to accelerated growth, absent to severely delayed speech, autistic behavior, and minor dysmorphic features.</description>
        <dbReference type="MIM" id="606232"/>
    </disease>
    <text>The disease is caused by variants affecting the gene represented in this entry.</text>
</comment>
<comment type="disease" evidence="12">
    <disease id="DI-03101">
        <name>Schizophrenia 15</name>
        <acronym>SCZD15</acronym>
        <description>A complex, multifactorial psychotic disorder or group of disorders characterized by disturbances in the form and content of thought (e.g. delusions, hallucinations), in mood (e.g. inappropriate affect), in sense of self and relationship to the external world (e.g. loss of ego boundaries, withdrawal), and in behavior (e.g bizarre or apparently purposeless behavior). Although it affects emotions, it is distinguished from mood disorders in which such disturbances are primary. Similarly, there may be mild impairment of cognitive function, and it is distinguished from the dementias in which disturbed cognitive function is considered primary. Some patients manifest schizophrenic as well as bipolar disorder symptoms and are often given the diagnosis of schizoaffective disorder.</description>
        <dbReference type="MIM" id="613950"/>
    </disease>
    <text>The disease is caused by variants affecting the gene represented in this entry.</text>
</comment>
<comment type="miscellaneous">
    <molecule>Isoform 1</molecule>
    <text>Primarily expressed in neurons.</text>
</comment>
<comment type="miscellaneous">
    <molecule>Isoform 2</molecule>
    <text evidence="18">Produced by alternative promoter usage.</text>
</comment>
<gene>
    <name type="primary">SHANK3</name>
    <name type="synonym">KIAA1650</name>
    <name type="synonym">PROSAP2</name>
    <name type="synonym">PSAP2</name>
</gene>
<keyword id="KW-0002">3D-structure</keyword>
<keyword id="KW-0009">Actin-binding</keyword>
<keyword id="KW-0877">Alternative promoter usage</keyword>
<keyword id="KW-0040">ANK repeat</keyword>
<keyword id="KW-1268">Autism spectrum disorder</keyword>
<keyword id="KW-0966">Cell projection</keyword>
<keyword id="KW-0160">Chromosomal rearrangement</keyword>
<keyword id="KW-0175">Coiled coil</keyword>
<keyword id="KW-0963">Cytoplasm</keyword>
<keyword id="KW-0225">Disease variant</keyword>
<keyword id="KW-0488">Methylation</keyword>
<keyword id="KW-0597">Phosphoprotein</keyword>
<keyword id="KW-1267">Proteomics identification</keyword>
<keyword id="KW-1185">Reference proteome</keyword>
<keyword id="KW-0677">Repeat</keyword>
<keyword id="KW-1211">Schizophrenia</keyword>
<keyword id="KW-0728">SH3 domain</keyword>
<keyword id="KW-0729">SH3-binding</keyword>
<keyword id="KW-0770">Synapse</keyword>
<dbReference type="EMBL" id="AC000050">
    <property type="status" value="NOT_ANNOTATED_CDS"/>
    <property type="molecule type" value="Genomic_DNA"/>
</dbReference>
<dbReference type="EMBL" id="AC000036">
    <property type="status" value="NOT_ANNOTATED_CDS"/>
    <property type="molecule type" value="Genomic_DNA"/>
</dbReference>
<dbReference type="EMBL" id="AB051437">
    <property type="protein sequence ID" value="BAB33320.1"/>
    <property type="molecule type" value="mRNA"/>
</dbReference>
<dbReference type="EMBL" id="AK074038">
    <property type="protein sequence ID" value="BAB84864.1"/>
    <property type="molecule type" value="mRNA"/>
</dbReference>
<dbReference type="EMBL" id="AB569469">
    <property type="protein sequence ID" value="BAJ09793.1"/>
    <property type="molecule type" value="mRNA"/>
</dbReference>
<dbReference type="RefSeq" id="NP_277052.1">
    <property type="nucleotide sequence ID" value="NM_033517.1"/>
</dbReference>
<dbReference type="PDB" id="6CPK">
    <property type="method" value="NMR"/>
    <property type="chains" value="A=546-605"/>
</dbReference>
<dbReference type="PDB" id="7C7I">
    <property type="method" value="X-ray"/>
    <property type="resolution" value="2.28 A"/>
    <property type="chains" value="C/D=76-174"/>
</dbReference>
<dbReference type="PDB" id="7C7J">
    <property type="method" value="X-ray"/>
    <property type="resolution" value="2.39 A"/>
    <property type="chains" value="C/D=76-174"/>
</dbReference>
<dbReference type="PDBsum" id="6CPK"/>
<dbReference type="PDBsum" id="7C7I"/>
<dbReference type="PDBsum" id="7C7J"/>
<dbReference type="SMR" id="Q9BYB0"/>
<dbReference type="BioGRID" id="124487">
    <property type="interactions" value="179"/>
</dbReference>
<dbReference type="CORUM" id="Q9BYB0"/>
<dbReference type="DIP" id="DIP-52267N"/>
<dbReference type="FunCoup" id="Q9BYB0">
    <property type="interactions" value="125"/>
</dbReference>
<dbReference type="IntAct" id="Q9BYB0">
    <property type="interactions" value="315"/>
</dbReference>
<dbReference type="MINT" id="Q9BYB0"/>
<dbReference type="STRING" id="9606.ENSP00000489407"/>
<dbReference type="TCDB" id="8.A.28.1.7">
    <property type="family name" value="the ankyrin (ankyrin) family"/>
</dbReference>
<dbReference type="CarbonylDB" id="Q9BYB0"/>
<dbReference type="GlyGen" id="Q9BYB0">
    <property type="glycosylation" value="5 sites"/>
</dbReference>
<dbReference type="iPTMnet" id="Q9BYB0"/>
<dbReference type="PhosphoSitePlus" id="Q9BYB0"/>
<dbReference type="SwissPalm" id="Q9BYB0"/>
<dbReference type="BioMuta" id="SHANK3"/>
<dbReference type="DMDM" id="148887434"/>
<dbReference type="jPOST" id="Q9BYB0"/>
<dbReference type="MassIVE" id="Q9BYB0"/>
<dbReference type="PeptideAtlas" id="Q9BYB0"/>
<dbReference type="ProteomicsDB" id="79606">
    <molecule id="Q9BYB0-1"/>
</dbReference>
<dbReference type="ABCD" id="Q9BYB0">
    <property type="antibodies" value="2 sequenced antibodies"/>
</dbReference>
<dbReference type="GeneID" id="85358"/>
<dbReference type="MANE-Select" id="ENST00000710353.1">
    <property type="protein sequence ID" value="ENSP00000518224.1"/>
    <property type="RefSeq nucleotide sequence ID" value="NM_001372044.2"/>
    <property type="RefSeq protein sequence ID" value="NP_001358973.1"/>
</dbReference>
<dbReference type="AGR" id="HGNC:14294"/>
<dbReference type="GeneCards" id="SHANK3"/>
<dbReference type="GeneReviews" id="SHANK3"/>
<dbReference type="HGNC" id="HGNC:14294">
    <property type="gene designation" value="SHANK3"/>
</dbReference>
<dbReference type="MalaCards" id="SHANK3"/>
<dbReference type="MIM" id="606230">
    <property type="type" value="gene"/>
</dbReference>
<dbReference type="MIM" id="606232">
    <property type="type" value="phenotype"/>
</dbReference>
<dbReference type="MIM" id="613950">
    <property type="type" value="phenotype"/>
</dbReference>
<dbReference type="neXtProt" id="NX_Q9BYB0"/>
<dbReference type="Orphanet" id="662169">
    <property type="disease" value="Phelan-McDermid syndrome due to 22q13.3 deletion"/>
</dbReference>
<dbReference type="Orphanet" id="662172">
    <property type="disease" value="Phelan-McDermid syndrome due to SHANK3 mutation"/>
</dbReference>
<dbReference type="InParanoid" id="Q9BYB0"/>
<dbReference type="OrthoDB" id="445896at2759"/>
<dbReference type="PAN-GO" id="Q9BYB0">
    <property type="GO annotations" value="5 GO annotations based on evolutionary models"/>
</dbReference>
<dbReference type="PathwayCommons" id="Q9BYB0"/>
<dbReference type="Reactome" id="R-HSA-6794361">
    <property type="pathway name" value="Neurexins and neuroligins"/>
</dbReference>
<dbReference type="Reactome" id="R-HSA-8853659">
    <property type="pathway name" value="RET signaling"/>
</dbReference>
<dbReference type="SignaLink" id="Q9BYB0"/>
<dbReference type="SIGNOR" id="Q9BYB0"/>
<dbReference type="BioGRID-ORCS" id="85358">
    <property type="hits" value="13 hits in 309 CRISPR screens"/>
</dbReference>
<dbReference type="CD-CODE" id="FB4E32DD">
    <property type="entry name" value="Presynaptic clusters and postsynaptic densities"/>
</dbReference>
<dbReference type="ChiTaRS" id="SHANK3">
    <property type="organism name" value="human"/>
</dbReference>
<dbReference type="GeneWiki" id="SHANK3"/>
<dbReference type="GenomeRNAi" id="85358"/>
<dbReference type="Pharos" id="Q9BYB0">
    <property type="development level" value="Tbio"/>
</dbReference>
<dbReference type="PRO" id="PR:Q9BYB0"/>
<dbReference type="Proteomes" id="UP000005640">
    <property type="component" value="Unplaced"/>
</dbReference>
<dbReference type="RNAct" id="Q9BYB0">
    <property type="molecule type" value="protein"/>
</dbReference>
<dbReference type="GO" id="GO:0060170">
    <property type="term" value="C:ciliary membrane"/>
    <property type="evidence" value="ECO:0000250"/>
    <property type="project" value="BHF-UCL"/>
</dbReference>
<dbReference type="GO" id="GO:0005829">
    <property type="term" value="C:cytosol"/>
    <property type="evidence" value="ECO:0000304"/>
    <property type="project" value="Reactome"/>
</dbReference>
<dbReference type="GO" id="GO:0043197">
    <property type="term" value="C:dendritic spine"/>
    <property type="evidence" value="ECO:0000318"/>
    <property type="project" value="GO_Central"/>
</dbReference>
<dbReference type="GO" id="GO:0043005">
    <property type="term" value="C:neuron projection"/>
    <property type="evidence" value="ECO:0000250"/>
    <property type="project" value="BHF-UCL"/>
</dbReference>
<dbReference type="GO" id="GO:0044309">
    <property type="term" value="C:neuron spine"/>
    <property type="evidence" value="ECO:0000250"/>
    <property type="project" value="BHF-UCL"/>
</dbReference>
<dbReference type="GO" id="GO:0005886">
    <property type="term" value="C:plasma membrane"/>
    <property type="evidence" value="ECO:0000250"/>
    <property type="project" value="BHF-UCL"/>
</dbReference>
<dbReference type="GO" id="GO:0014069">
    <property type="term" value="C:postsynaptic density"/>
    <property type="evidence" value="ECO:0000250"/>
    <property type="project" value="BHF-UCL"/>
</dbReference>
<dbReference type="GO" id="GO:0003779">
    <property type="term" value="F:actin binding"/>
    <property type="evidence" value="ECO:0007669"/>
    <property type="project" value="UniProtKB-KW"/>
</dbReference>
<dbReference type="GO" id="GO:0035255">
    <property type="term" value="F:ionotropic glutamate receptor binding"/>
    <property type="evidence" value="ECO:0000250"/>
    <property type="project" value="BHF-UCL"/>
</dbReference>
<dbReference type="GO" id="GO:0097110">
    <property type="term" value="F:scaffold protein binding"/>
    <property type="evidence" value="ECO:0000250"/>
    <property type="project" value="BHF-UCL"/>
</dbReference>
<dbReference type="GO" id="GO:0017124">
    <property type="term" value="F:SH3 domain binding"/>
    <property type="evidence" value="ECO:0000250"/>
    <property type="project" value="BHF-UCL"/>
</dbReference>
<dbReference type="GO" id="GO:0030160">
    <property type="term" value="F:synaptic receptor adaptor activity"/>
    <property type="evidence" value="ECO:0000250"/>
    <property type="project" value="BHF-UCL"/>
</dbReference>
<dbReference type="GO" id="GO:0008270">
    <property type="term" value="F:zinc ion binding"/>
    <property type="evidence" value="ECO:0000250"/>
    <property type="project" value="BHF-UCL"/>
</dbReference>
<dbReference type="GO" id="GO:0030534">
    <property type="term" value="P:adult behavior"/>
    <property type="evidence" value="ECO:0000315"/>
    <property type="project" value="BHF-UCL"/>
</dbReference>
<dbReference type="GO" id="GO:0097113">
    <property type="term" value="P:AMPA glutamate receptor clustering"/>
    <property type="evidence" value="ECO:0000250"/>
    <property type="project" value="BHF-UCL"/>
</dbReference>
<dbReference type="GO" id="GO:0048854">
    <property type="term" value="P:brain morphogenesis"/>
    <property type="evidence" value="ECO:0000250"/>
    <property type="project" value="BHF-UCL"/>
</dbReference>
<dbReference type="GO" id="GO:0060997">
    <property type="term" value="P:dendritic spine morphogenesis"/>
    <property type="evidence" value="ECO:0000250"/>
    <property type="project" value="BHF-UCL"/>
</dbReference>
<dbReference type="GO" id="GO:0097117">
    <property type="term" value="P:guanylate kinase-associated protein clustering"/>
    <property type="evidence" value="ECO:0000250"/>
    <property type="project" value="BHF-UCL"/>
</dbReference>
<dbReference type="GO" id="GO:0007612">
    <property type="term" value="P:learning"/>
    <property type="evidence" value="ECO:0000315"/>
    <property type="project" value="BHF-UCL"/>
</dbReference>
<dbReference type="GO" id="GO:0000165">
    <property type="term" value="P:MAPK cascade"/>
    <property type="evidence" value="ECO:0000250"/>
    <property type="project" value="BHF-UCL"/>
</dbReference>
<dbReference type="GO" id="GO:0007613">
    <property type="term" value="P:memory"/>
    <property type="evidence" value="ECO:0000250"/>
    <property type="project" value="BHF-UCL"/>
</dbReference>
<dbReference type="GO" id="GO:0032232">
    <property type="term" value="P:negative regulation of actin filament bundle assembly"/>
    <property type="evidence" value="ECO:0000250"/>
    <property type="project" value="BHF-UCL"/>
</dbReference>
<dbReference type="GO" id="GO:0045794">
    <property type="term" value="P:negative regulation of cell volume"/>
    <property type="evidence" value="ECO:0000250"/>
    <property type="project" value="BHF-UCL"/>
</dbReference>
<dbReference type="GO" id="GO:0050885">
    <property type="term" value="P:neuromuscular process controlling balance"/>
    <property type="evidence" value="ECO:0000250"/>
    <property type="project" value="BHF-UCL"/>
</dbReference>
<dbReference type="GO" id="GO:0097114">
    <property type="term" value="P:NMDA glutamate receptor clustering"/>
    <property type="evidence" value="ECO:0000250"/>
    <property type="project" value="BHF-UCL"/>
</dbReference>
<dbReference type="GO" id="GO:0060999">
    <property type="term" value="P:positive regulation of dendritic spine development"/>
    <property type="evidence" value="ECO:0000250"/>
    <property type="project" value="BHF-UCL"/>
</dbReference>
<dbReference type="GO" id="GO:2000463">
    <property type="term" value="P:positive regulation of excitatory postsynaptic potential"/>
    <property type="evidence" value="ECO:0000250"/>
    <property type="project" value="BHF-UCL"/>
</dbReference>
<dbReference type="GO" id="GO:1900451">
    <property type="term" value="P:positive regulation of glutamate receptor signaling pathway"/>
    <property type="evidence" value="ECO:0000250"/>
    <property type="project" value="BHF-UCL"/>
</dbReference>
<dbReference type="GO" id="GO:0048170">
    <property type="term" value="P:positive regulation of long-term neuronal synaptic plasticity"/>
    <property type="evidence" value="ECO:0000250"/>
    <property type="project" value="BHF-UCL"/>
</dbReference>
<dbReference type="GO" id="GO:1900273">
    <property type="term" value="P:positive regulation of long-term synaptic potentiation"/>
    <property type="evidence" value="ECO:0000250"/>
    <property type="project" value="BHF-UCL"/>
</dbReference>
<dbReference type="GO" id="GO:0051835">
    <property type="term" value="P:positive regulation of synapse structural plasticity"/>
    <property type="evidence" value="ECO:0000250"/>
    <property type="project" value="BHF-UCL"/>
</dbReference>
<dbReference type="GO" id="GO:0051968">
    <property type="term" value="P:positive regulation of synaptic transmission, glutamatergic"/>
    <property type="evidence" value="ECO:0000250"/>
    <property type="project" value="BHF-UCL"/>
</dbReference>
<dbReference type="GO" id="GO:0097107">
    <property type="term" value="P:postsynaptic density assembly"/>
    <property type="evidence" value="ECO:0000250"/>
    <property type="project" value="BHF-UCL"/>
</dbReference>
<dbReference type="GO" id="GO:0061001">
    <property type="term" value="P:regulation of dendritic spine morphogenesis"/>
    <property type="evidence" value="ECO:0000250"/>
    <property type="project" value="BHF-UCL"/>
</dbReference>
<dbReference type="GO" id="GO:1900452">
    <property type="term" value="P:regulation of long-term synaptic depression"/>
    <property type="evidence" value="ECO:0000250"/>
    <property type="project" value="BHF-UCL"/>
</dbReference>
<dbReference type="GO" id="GO:1900271">
    <property type="term" value="P:regulation of long-term synaptic potentiation"/>
    <property type="evidence" value="ECO:0000250"/>
    <property type="project" value="BHF-UCL"/>
</dbReference>
<dbReference type="GO" id="GO:0035176">
    <property type="term" value="P:social behavior"/>
    <property type="evidence" value="ECO:0000315"/>
    <property type="project" value="BHF-UCL"/>
</dbReference>
<dbReference type="GO" id="GO:0021773">
    <property type="term" value="P:striatal medium spiny neuron differentiation"/>
    <property type="evidence" value="ECO:0000250"/>
    <property type="project" value="BHF-UCL"/>
</dbReference>
<dbReference type="GO" id="GO:0007416">
    <property type="term" value="P:synapse assembly"/>
    <property type="evidence" value="ECO:0000250"/>
    <property type="project" value="BHF-UCL"/>
</dbReference>
<dbReference type="GO" id="GO:0042297">
    <property type="term" value="P:vocal learning"/>
    <property type="evidence" value="ECO:0000315"/>
    <property type="project" value="BHF-UCL"/>
</dbReference>
<dbReference type="GO" id="GO:0071625">
    <property type="term" value="P:vocalization behavior"/>
    <property type="evidence" value="ECO:0000315"/>
    <property type="project" value="BHF-UCL"/>
</dbReference>
<dbReference type="CDD" id="cd17177">
    <property type="entry name" value="FERM_F0_SHANK3"/>
    <property type="match status" value="1"/>
</dbReference>
<dbReference type="CDD" id="cd06746">
    <property type="entry name" value="PDZ_SHANK1_3-like"/>
    <property type="match status" value="1"/>
</dbReference>
<dbReference type="CDD" id="cd09506">
    <property type="entry name" value="SAM_Shank1_2_3"/>
    <property type="match status" value="1"/>
</dbReference>
<dbReference type="CDD" id="cd11984">
    <property type="entry name" value="SH3_Shank3"/>
    <property type="match status" value="1"/>
</dbReference>
<dbReference type="FunFam" id="3.10.20.90:FF:000029">
    <property type="entry name" value="SH3 and multiple ankyrin repeat domains protein 1"/>
    <property type="match status" value="1"/>
</dbReference>
<dbReference type="FunFam" id="1.10.150.50:FF:000006">
    <property type="entry name" value="SH3 and multiple ankyrin repeat domains protein 2"/>
    <property type="match status" value="1"/>
</dbReference>
<dbReference type="FunFam" id="2.30.30.40:FF:000025">
    <property type="entry name" value="SH3 and multiple ankyrin repeat domains protein 2"/>
    <property type="match status" value="1"/>
</dbReference>
<dbReference type="FunFam" id="2.30.42.10:FF:000018">
    <property type="entry name" value="SH3 and multiple ankyrin repeat domains protein 2"/>
    <property type="match status" value="1"/>
</dbReference>
<dbReference type="FunFam" id="1.25.40.20:FF:000048">
    <property type="entry name" value="SH3 and multiple ankyrin repeat domains protein 3"/>
    <property type="match status" value="1"/>
</dbReference>
<dbReference type="FunFam" id="1.25.40.20:FF:000064">
    <property type="entry name" value="SH3 and multiple ankyrin repeat domains protein 3"/>
    <property type="match status" value="1"/>
</dbReference>
<dbReference type="Gene3D" id="2.30.42.10">
    <property type="match status" value="1"/>
</dbReference>
<dbReference type="Gene3D" id="1.25.40.20">
    <property type="entry name" value="Ankyrin repeat-containing domain"/>
    <property type="match status" value="2"/>
</dbReference>
<dbReference type="Gene3D" id="3.10.20.90">
    <property type="entry name" value="Phosphatidylinositol 3-kinase Catalytic Subunit, Chain A, domain 1"/>
    <property type="match status" value="1"/>
</dbReference>
<dbReference type="Gene3D" id="2.30.30.40">
    <property type="entry name" value="SH3 Domains"/>
    <property type="match status" value="1"/>
</dbReference>
<dbReference type="Gene3D" id="1.10.150.50">
    <property type="entry name" value="Transcription Factor, Ets-1"/>
    <property type="match status" value="1"/>
</dbReference>
<dbReference type="InterPro" id="IPR002110">
    <property type="entry name" value="Ankyrin_rpt"/>
</dbReference>
<dbReference type="InterPro" id="IPR036770">
    <property type="entry name" value="Ankyrin_rpt-contain_sf"/>
</dbReference>
<dbReference type="InterPro" id="IPR001478">
    <property type="entry name" value="PDZ"/>
</dbReference>
<dbReference type="InterPro" id="IPR041489">
    <property type="entry name" value="PDZ_6"/>
</dbReference>
<dbReference type="InterPro" id="IPR036034">
    <property type="entry name" value="PDZ_sf"/>
</dbReference>
<dbReference type="InterPro" id="IPR001660">
    <property type="entry name" value="SAM"/>
</dbReference>
<dbReference type="InterPro" id="IPR013761">
    <property type="entry name" value="SAM/pointed_sf"/>
</dbReference>
<dbReference type="InterPro" id="IPR036028">
    <property type="entry name" value="SH3-like_dom_sf"/>
</dbReference>
<dbReference type="InterPro" id="IPR001452">
    <property type="entry name" value="SH3_domain"/>
</dbReference>
<dbReference type="InterPro" id="IPR051569">
    <property type="entry name" value="SHANK"/>
</dbReference>
<dbReference type="PANTHER" id="PTHR24135">
    <property type="entry name" value="SH3 AND MULTIPLE ANKYRIN REPEAT DOMAINS PROTEIN"/>
    <property type="match status" value="1"/>
</dbReference>
<dbReference type="PANTHER" id="PTHR24135:SF4">
    <property type="entry name" value="SH3 AND MULTIPLE ANKYRIN REPEAT DOMAINS PROTEIN 3"/>
    <property type="match status" value="1"/>
</dbReference>
<dbReference type="Pfam" id="PF12796">
    <property type="entry name" value="Ank_2"/>
    <property type="match status" value="2"/>
</dbReference>
<dbReference type="Pfam" id="PF17820">
    <property type="entry name" value="PDZ_6"/>
    <property type="match status" value="1"/>
</dbReference>
<dbReference type="Pfam" id="PF00536">
    <property type="entry name" value="SAM_1"/>
    <property type="match status" value="1"/>
</dbReference>
<dbReference type="Pfam" id="PF07653">
    <property type="entry name" value="SH3_2"/>
    <property type="match status" value="1"/>
</dbReference>
<dbReference type="SMART" id="SM00248">
    <property type="entry name" value="ANK"/>
    <property type="match status" value="5"/>
</dbReference>
<dbReference type="SMART" id="SM00228">
    <property type="entry name" value="PDZ"/>
    <property type="match status" value="1"/>
</dbReference>
<dbReference type="SMART" id="SM00454">
    <property type="entry name" value="SAM"/>
    <property type="match status" value="1"/>
</dbReference>
<dbReference type="SMART" id="SM00326">
    <property type="entry name" value="SH3"/>
    <property type="match status" value="1"/>
</dbReference>
<dbReference type="SUPFAM" id="SSF48403">
    <property type="entry name" value="Ankyrin repeat"/>
    <property type="match status" value="1"/>
</dbReference>
<dbReference type="SUPFAM" id="SSF50156">
    <property type="entry name" value="PDZ domain-like"/>
    <property type="match status" value="1"/>
</dbReference>
<dbReference type="SUPFAM" id="SSF47769">
    <property type="entry name" value="SAM/Pointed domain"/>
    <property type="match status" value="1"/>
</dbReference>
<dbReference type="SUPFAM" id="SSF50044">
    <property type="entry name" value="SH3-domain"/>
    <property type="match status" value="1"/>
</dbReference>
<dbReference type="PROSITE" id="PS50297">
    <property type="entry name" value="ANK_REP_REGION"/>
    <property type="match status" value="1"/>
</dbReference>
<dbReference type="PROSITE" id="PS50088">
    <property type="entry name" value="ANK_REPEAT"/>
    <property type="match status" value="4"/>
</dbReference>
<dbReference type="PROSITE" id="PS50106">
    <property type="entry name" value="PDZ"/>
    <property type="match status" value="1"/>
</dbReference>
<dbReference type="PROSITE" id="PS50105">
    <property type="entry name" value="SAM_DOMAIN"/>
    <property type="match status" value="1"/>
</dbReference>
<dbReference type="PROSITE" id="PS50002">
    <property type="entry name" value="SH3"/>
    <property type="match status" value="1"/>
</dbReference>
<sequence length="1806" mass="191338">MQLSRAAAAAAAAPAEPPEPLSPAPAPAPAPPGPLPRSAADGAPAGGKGGPGRRAESPGAPFPGASGPGPGPGAGMDGPGASAVVVRVGIPDLQQTKCLRLDPAAPVWAAKQRVLCALNHSLQDALNYGLFQPPSRGRAGKFLDEERLLQEYPPNLDTPLPYLEFRYKRRVYAQNLIDDKQFAKLHTKANLKKFMDYVQLHSTDKVARLLDKGLDPNFHDPDSGECPLSLAAQLDNATDLLKVLKNGGAHLDFRTRDGLTAVHCATRQRNAAALTTLLDLGASPDYKDSRGLTPLYHSALGGGDALCCELLLHDHAQLGITDENGWQEIHQACRFGHVQHLEHLLFYGADMGAQNASGNTALHICALYNQESCARVLLFRGANRDVRNYNSQTAFQVAIIAGNFELAEVIKTHKDSDVVPFRETPSYAKRRRLAGPSGLASPRPLQRSASDINLKGEAQPAASPGPSLRSLPHQLLLQRLQEEKDRDRDADQESNISGPLAGRAGQSKISPSGPGGPGPAPGPGPAPPAPPAPPPRGPKRKLYSAVPGRKFIAVKAHSPQGEGEIPLHRGEAVKVLSIGEGGFWEGTVKGRTGWFPADCVEEVQMRQHDTRPETREDRTKRLFRHYTVGSYDSLTSHSDYVIDDKVAVLQKRDHEGFGFVLRGAKAETPIEEFTPTPAFPALQYLESVDVEGVAWRAGLRTGDFLIEVNGVNVVKVGHKQVVALIRQGGNRLVMKVVSVTRKPEEDGARRRAPPPPKRAPSTTLTLRSKSMTAELEELASIRRRKGEKLDEMLAAAAEPTLRPDIADADSRAATVKQRPTSRRITPAEISSLFERQGLPGPEKLPGSLRKGIPRTKSVGEDEKLASLLEGRFPRSTSMQDPVREGRGIPPPPQTAPPPPPAPYYFDSGPPPAFSPPPPPGRAYDTVRSSFKPGLEARLGAGAAGLYEPGAALGPLPYPERQKRARSMIILQDSAPESGDAPRPPPAATPPERPKRRPRPPGPDSPYANLGAFSASLFAPSKPQRRKSPLVKQLQVEDAQERAALAVGSPGPGGGSFAREPSPTHRGPRPGGLDYGAGDGPGLAFGGPGPAKDRRLEERRRSTVFLSVGAIEGSAPGADLPSLQPSRSIDERLLGTGPTAGRDLLLPSPVSALKPLVSGPSLGPSGSTFIHPLTGKPLDPSSPLALALAARERALASQAPSRSPTPVHSPDADRPGPLFVDVQARDPERGSLASPAFSPRSPAWIPVPARREAEKVPREERKSPEDKKSMILSVLDTSLQRPAGLIVVHATSNGQEPSRLGGAEEERPGTPELAPAPMQSAAVAEPLPSPRAQPPGGTPADAGPGQGSSEEEPELVFAVNLPPAQLSSSDEETREELARIGLVPPPEEFANGVLLATPLAGPGPSPTTVPSPASGKPSSEPPPAPESAADSGVEEADTRSSSDPHLETTSTISTVSSMSTLSSESGELTDTHTSFADGHTFLLEKPPVPPKPKLKSPLGKGPVTFRDPLLKQSSDSELMAQQHHAASAGLASAAGPARPRYLFQRRSKLWGDPVESRGLPGPEDDKPTVISELSSRLQQLNKDTRSLGEEPVGGLGSLLDPAKKSPIAAARLFSSLGELSSISAQRSPGGPGGGASYSVRPSGRYPVARRAPSPVKPASLERVEGLGAGAGGAGRPFGLTPPTILKSSSLSIPHEPKEVRFVVRSVSARSRSPSPSPLPSPASGPGPGAPGPRRPFQQKPLQLWSKFDVGDWLESIHLGEHRDRFEDHEIEGAHLPALTKDDFVELGVTRVGHRMNIERALRQLDGS</sequence>
<reference key="1">
    <citation type="journal article" date="1999" name="Nature">
        <title>The DNA sequence of human chromosome 22.</title>
        <authorList>
            <person name="Dunham I."/>
            <person name="Hunt A.R."/>
            <person name="Collins J.E."/>
            <person name="Bruskiewich R."/>
            <person name="Beare D.M."/>
            <person name="Clamp M."/>
            <person name="Smink L.J."/>
            <person name="Ainscough R."/>
            <person name="Almeida J.P."/>
            <person name="Babbage A.K."/>
            <person name="Bagguley C."/>
            <person name="Bailey J."/>
            <person name="Barlow K.F."/>
            <person name="Bates K.N."/>
            <person name="Beasley O.P."/>
            <person name="Bird C.P."/>
            <person name="Blakey S.E."/>
            <person name="Bridgeman A.M."/>
            <person name="Buck D."/>
            <person name="Burgess J."/>
            <person name="Burrill W.D."/>
            <person name="Burton J."/>
            <person name="Carder C."/>
            <person name="Carter N.P."/>
            <person name="Chen Y."/>
            <person name="Clark G."/>
            <person name="Clegg S.M."/>
            <person name="Cobley V.E."/>
            <person name="Cole C.G."/>
            <person name="Collier R.E."/>
            <person name="Connor R."/>
            <person name="Conroy D."/>
            <person name="Corby N.R."/>
            <person name="Coville G.J."/>
            <person name="Cox A.V."/>
            <person name="Davis J."/>
            <person name="Dawson E."/>
            <person name="Dhami P.D."/>
            <person name="Dockree C."/>
            <person name="Dodsworth S.J."/>
            <person name="Durbin R.M."/>
            <person name="Ellington A.G."/>
            <person name="Evans K.L."/>
            <person name="Fey J.M."/>
            <person name="Fleming K."/>
            <person name="French L."/>
            <person name="Garner A.A."/>
            <person name="Gilbert J.G.R."/>
            <person name="Goward M.E."/>
            <person name="Grafham D.V."/>
            <person name="Griffiths M.N.D."/>
            <person name="Hall C."/>
            <person name="Hall R.E."/>
            <person name="Hall-Tamlyn G."/>
            <person name="Heathcott R.W."/>
            <person name="Ho S."/>
            <person name="Holmes S."/>
            <person name="Hunt S.E."/>
            <person name="Jones M.C."/>
            <person name="Kershaw J."/>
            <person name="Kimberley A.M."/>
            <person name="King A."/>
            <person name="Laird G.K."/>
            <person name="Langford C.F."/>
            <person name="Leversha M.A."/>
            <person name="Lloyd C."/>
            <person name="Lloyd D.M."/>
            <person name="Martyn I.D."/>
            <person name="Mashreghi-Mohammadi M."/>
            <person name="Matthews L.H."/>
            <person name="Mccann O.T."/>
            <person name="Mcclay J."/>
            <person name="Mclaren S."/>
            <person name="McMurray A.A."/>
            <person name="Milne S.A."/>
            <person name="Mortimore B.J."/>
            <person name="Odell C.N."/>
            <person name="Pavitt R."/>
            <person name="Pearce A.V."/>
            <person name="Pearson D."/>
            <person name="Phillimore B.J.C.T."/>
            <person name="Phillips S.H."/>
            <person name="Plumb R.W."/>
            <person name="Ramsay H."/>
            <person name="Ramsey Y."/>
            <person name="Rogers L."/>
            <person name="Ross M.T."/>
            <person name="Scott C.E."/>
            <person name="Sehra H.K."/>
            <person name="Skuce C.D."/>
            <person name="Smalley S."/>
            <person name="Smith M.L."/>
            <person name="Soderlund C."/>
            <person name="Spragon L."/>
            <person name="Steward C.A."/>
            <person name="Sulston J.E."/>
            <person name="Swann R.M."/>
            <person name="Vaudin M."/>
            <person name="Wall M."/>
            <person name="Wallis J.M."/>
            <person name="Whiteley M.N."/>
            <person name="Willey D.L."/>
            <person name="Williams L."/>
            <person name="Williams S.A."/>
            <person name="Williamson H."/>
            <person name="Wilmer T.E."/>
            <person name="Wilming L."/>
            <person name="Wright C.L."/>
            <person name="Hubbard T."/>
            <person name="Bentley D.R."/>
            <person name="Beck S."/>
            <person name="Rogers J."/>
            <person name="Shimizu N."/>
            <person name="Minoshima S."/>
            <person name="Kawasaki K."/>
            <person name="Sasaki T."/>
            <person name="Asakawa S."/>
            <person name="Kudoh J."/>
            <person name="Shintani A."/>
            <person name="Shibuya K."/>
            <person name="Yoshizaki Y."/>
            <person name="Aoki N."/>
            <person name="Mitsuyama S."/>
            <person name="Roe B.A."/>
            <person name="Chen F."/>
            <person name="Chu L."/>
            <person name="Crabtree J."/>
            <person name="Deschamps S."/>
            <person name="Do A."/>
            <person name="Do T."/>
            <person name="Dorman A."/>
            <person name="Fang F."/>
            <person name="Fu Y."/>
            <person name="Hu P."/>
            <person name="Hua A."/>
            <person name="Kenton S."/>
            <person name="Lai H."/>
            <person name="Lao H.I."/>
            <person name="Lewis J."/>
            <person name="Lewis S."/>
            <person name="Lin S.-P."/>
            <person name="Loh P."/>
            <person name="Malaj E."/>
            <person name="Nguyen T."/>
            <person name="Pan H."/>
            <person name="Phan S."/>
            <person name="Qi S."/>
            <person name="Qian Y."/>
            <person name="Ray L."/>
            <person name="Ren Q."/>
            <person name="Shaull S."/>
            <person name="Sloan D."/>
            <person name="Song L."/>
            <person name="Wang Q."/>
            <person name="Wang Y."/>
            <person name="Wang Z."/>
            <person name="White J."/>
            <person name="Willingham D."/>
            <person name="Wu H."/>
            <person name="Yao Z."/>
            <person name="Zhan M."/>
            <person name="Zhang G."/>
            <person name="Chissoe S."/>
            <person name="Murray J."/>
            <person name="Miller N."/>
            <person name="Minx P."/>
            <person name="Fulton R."/>
            <person name="Johnson D."/>
            <person name="Bemis G."/>
            <person name="Bentley D."/>
            <person name="Bradshaw H."/>
            <person name="Bourne S."/>
            <person name="Cordes M."/>
            <person name="Du Z."/>
            <person name="Fulton L."/>
            <person name="Goela D."/>
            <person name="Graves T."/>
            <person name="Hawkins J."/>
            <person name="Hinds K."/>
            <person name="Kemp K."/>
            <person name="Latreille P."/>
            <person name="Layman D."/>
            <person name="Ozersky P."/>
            <person name="Rohlfing T."/>
            <person name="Scheet P."/>
            <person name="Walker C."/>
            <person name="Wamsley A."/>
            <person name="Wohldmann P."/>
            <person name="Pepin K."/>
            <person name="Nelson J."/>
            <person name="Korf I."/>
            <person name="Bedell J.A."/>
            <person name="Hillier L.W."/>
            <person name="Mardis E."/>
            <person name="Waterston R."/>
            <person name="Wilson R."/>
            <person name="Emanuel B.S."/>
            <person name="Shaikh T."/>
            <person name="Kurahashi H."/>
            <person name="Saitta S."/>
            <person name="Budarf M.L."/>
            <person name="McDermid H.E."/>
            <person name="Johnson A."/>
            <person name="Wong A.C.C."/>
            <person name="Morrow B.E."/>
            <person name="Edelmann L."/>
            <person name="Kim U.J."/>
            <person name="Shizuya H."/>
            <person name="Simon M.I."/>
            <person name="Dumanski J.P."/>
            <person name="Peyrard M."/>
            <person name="Kedra D."/>
            <person name="Seroussi E."/>
            <person name="Fransson I."/>
            <person name="Tapia I."/>
            <person name="Bruder C.E."/>
            <person name="O'Brien K.P."/>
            <person name="Wilkinson P."/>
            <person name="Bodenteich A."/>
            <person name="Hartman K."/>
            <person name="Hu X."/>
            <person name="Khan A.S."/>
            <person name="Lane L."/>
            <person name="Tilahun Y."/>
            <person name="Wright H."/>
        </authorList>
    </citation>
    <scope>NUCLEOTIDE SEQUENCE [LARGE SCALE GENOMIC DNA]</scope>
</reference>
<reference key="2">
    <citation type="submission" date="2010-06" db="EMBL/GenBank/DDBJ databases">
        <title>Novel variants of human SHANK3 gene.</title>
        <authorList>
            <person name="Uchino S."/>
            <person name="Waga C."/>
            <person name="Kohsaka S."/>
        </authorList>
    </citation>
    <scope>NUCLEOTIDE SEQUENCE [MRNA] OF 76-1806 (ISOFORM 1)</scope>
</reference>
<reference key="3">
    <citation type="journal article" date="2001" name="DNA Res.">
        <title>Identification of novel transcribed sequences on human chromosome 22 by expressed sequence tag mapping.</title>
        <authorList>
            <person name="Hirosawa M."/>
            <person name="Nagase T."/>
            <person name="Murahashi Y."/>
            <person name="Kikuno R."/>
            <person name="Ohara O."/>
        </authorList>
    </citation>
    <scope>NUCLEOTIDE SEQUENCE [LARGE SCALE MRNA] OF 1010-1806 (ISOFORMS 1/2)</scope>
</reference>
<reference key="4">
    <citation type="submission" date="2002-01" db="EMBL/GenBank/DDBJ databases">
        <title>The nucleotide sequence of a long cDNA clone isolated from human spleen.</title>
        <authorList>
            <person name="Ohara O."/>
            <person name="Nagase T."/>
            <person name="Kikuno R."/>
            <person name="Okumura K."/>
        </authorList>
    </citation>
    <scope>NUCLEOTIDE SEQUENCE [LARGE SCALE MRNA] OF 1037-1806 (ISOFORMS 1/2)</scope>
    <source>
        <tissue>Spleen</tissue>
    </source>
</reference>
<reference key="5">
    <citation type="journal article" date="2008" name="J. Proteome Res.">
        <title>Phosphoproteome of resting human platelets.</title>
        <authorList>
            <person name="Zahedi R.P."/>
            <person name="Lewandrowski U."/>
            <person name="Wiesner J."/>
            <person name="Wortelkamp S."/>
            <person name="Moebius J."/>
            <person name="Schuetz C."/>
            <person name="Walter U."/>
            <person name="Gambaryan S."/>
            <person name="Sickmann A."/>
        </authorList>
    </citation>
    <scope>PHOSPHORYLATION [LARGE SCALE ANALYSIS] AT SER-1233 AND SER-1237</scope>
    <scope>IDENTIFICATION BY MASS SPECTROMETRY [LARGE SCALE ANALYSIS]</scope>
    <source>
        <tissue>Platelet</tissue>
    </source>
</reference>
<reference key="6">
    <citation type="journal article" date="2009" name="Sci. Signal.">
        <title>Quantitative phosphoproteomic analysis of T cell receptor signaling reveals system-wide modulation of protein-protein interactions.</title>
        <authorList>
            <person name="Mayya V."/>
            <person name="Lundgren D.H."/>
            <person name="Hwang S.-I."/>
            <person name="Rezaul K."/>
            <person name="Wu L."/>
            <person name="Eng J.K."/>
            <person name="Rodionov V."/>
            <person name="Han D.K."/>
        </authorList>
    </citation>
    <scope>PHOSPHORYLATION [LARGE SCALE ANALYSIS] AT THR-1309 AND SER-1328</scope>
    <scope>IDENTIFICATION BY MASS SPECTROMETRY [LARGE SCALE ANALYSIS]</scope>
    <source>
        <tissue>Leukemic T-cell</tissue>
    </source>
</reference>
<reference key="7">
    <citation type="journal article" date="2014" name="Hum. Mol. Genet.">
        <title>Epigenetic dysregulation of SHANK3 in brain tissues from individuals with autism spectrum disorders.</title>
        <authorList>
            <person name="Zhu L."/>
            <person name="Wang X."/>
            <person name="Li X.L."/>
            <person name="Towers A."/>
            <person name="Cao X."/>
            <person name="Wang P."/>
            <person name="Bowman R."/>
            <person name="Yang H."/>
            <person name="Goldstein J."/>
            <person name="Li Y.J."/>
            <person name="Jiang Y.H."/>
        </authorList>
    </citation>
    <scope>ALTERNATIVE SPLICING (ISOFORM 2)</scope>
    <scope>INVOLVEMENT IN NEUROPSYCHIATRIC DISORDERS</scope>
</reference>
<reference key="8">
    <citation type="journal article" date="2001" name="Am. J. Hum. Genet.">
        <title>Disruption of the ProSAP2 gene in a t(12;22)(q24.1;q13.3) is associated with the 22q13.3 deletion syndrome.</title>
        <authorList>
            <person name="Bonaglia M.C."/>
            <person name="Giorda R."/>
            <person name="Borgatti R."/>
            <person name="Felisari G."/>
            <person name="Gagliardi C."/>
            <person name="Selicorni A."/>
            <person name="Zuffardi O."/>
        </authorList>
    </citation>
    <scope>CHROMOSOMAL TRANSLOCATION WITH APPL2</scope>
</reference>
<reference key="9">
    <citation type="journal article" date="2000" name="J. Cell Sci.">
        <title>The Shank family of scaffold proteins.</title>
        <authorList>
            <person name="Sheng M."/>
            <person name="Kim E."/>
        </authorList>
    </citation>
    <scope>REVIEW</scope>
</reference>
<reference key="10">
    <citation type="journal article" date="2002" name="Mol. Cell. Neurosci.">
        <title>The insulin receptor substrate IRSp53 links postsynaptic shank1 to the small G-protein cdc42.</title>
        <authorList>
            <person name="Soltau M."/>
            <person name="Richter D."/>
            <person name="Kreienkamp H.-J."/>
        </authorList>
    </citation>
    <scope>INTERACTION WITH BAIAP2</scope>
</reference>
<reference key="11">
    <citation type="journal article" date="2012" name="Eur. J. Med. Genet.">
        <title>Bipolar affective disorder and early dementia onset in a male patient with SHANK3 deletion.</title>
        <authorList>
            <person name="Vucurovic K."/>
            <person name="Landais E."/>
            <person name="Delahaigue C."/>
            <person name="Eutrope J."/>
            <person name="Schneider A."/>
            <person name="Leroy C."/>
            <person name="Kabbaj H."/>
            <person name="Motte J."/>
            <person name="Gaillard D."/>
            <person name="Rolland A.C."/>
            <person name="Doco-Fenzy M."/>
        </authorList>
    </citation>
    <scope>INVOLVEMENT IN NEUROPSYCHIATRIC DISORDERS</scope>
</reference>
<reference key="12">
    <citation type="journal article" date="2013" name="Mol. Autism">
        <title>Prospective investigation of autism and genotype-phenotype correlations in 22q13 deletion syndrome and SHANK3 deficiency.</title>
        <authorList>
            <person name="Soorya L."/>
            <person name="Kolevzon A."/>
            <person name="Zweifach J."/>
            <person name="Lim T."/>
            <person name="Dobry Y."/>
            <person name="Schwartz L."/>
            <person name="Frank Y."/>
            <person name="Wang A.T."/>
            <person name="Cai G."/>
            <person name="Parkhomenko E."/>
            <person name="Halpern D."/>
            <person name="Grodberg D."/>
            <person name="Angarita B."/>
            <person name="Willner J.P."/>
            <person name="Yang A."/>
            <person name="Canitano R."/>
            <person name="Chaplin W."/>
            <person name="Betancur C."/>
            <person name="Buxbaum J.D."/>
        </authorList>
    </citation>
    <scope>INVOLVEMENT IN PHMDS</scope>
</reference>
<reference key="13">
    <citation type="journal article" date="2013" name="Nature">
        <title>SHANK3 overexpression causes manic-like behaviour with unique pharmacogenetic properties.</title>
        <authorList>
            <person name="Han K."/>
            <person name="Holder J.L. Jr."/>
            <person name="Schaaf C.P."/>
            <person name="Lu H."/>
            <person name="Chen H."/>
            <person name="Kang H."/>
            <person name="Tang J."/>
            <person name="Wu Z."/>
            <person name="Hao S."/>
            <person name="Cheung S.W."/>
            <person name="Yu P."/>
            <person name="Sun H."/>
            <person name="Breman A.M."/>
            <person name="Patel A."/>
            <person name="Lu H.C."/>
            <person name="Zoghbi H.Y."/>
        </authorList>
    </citation>
    <scope>INVOLVEMENT IN NEUROPSYCHIATRIC DISORDERS</scope>
</reference>
<reference key="14">
    <citation type="journal article" date="2013" name="Nature">
        <title>SHANK3 and IGF1 restore synaptic deficits in neurons from 22q13 deletion syndrome patients.</title>
        <authorList>
            <person name="Shcheglovitov A."/>
            <person name="Shcheglovitova O."/>
            <person name="Yazawa M."/>
            <person name="Portmann T."/>
            <person name="Shu R."/>
            <person name="Sebastiano V."/>
            <person name="Krawisz A."/>
            <person name="Froehlich W."/>
            <person name="Bernstein J.A."/>
            <person name="Hallmayer J.F."/>
            <person name="Dolmetsch R.E."/>
        </authorList>
    </citation>
    <scope>INVOLVEMENT IN PHMDS</scope>
    <scope>FUNCTION IN SYNAPSE FORMATION</scope>
    <scope>SUBCELLULAR LOCATION</scope>
</reference>
<reference key="15">
    <citation type="journal article" date="2014" name="J. Proteomics">
        <title>An enzyme assisted RP-RPLC approach for in-depth analysis of human liver phosphoproteome.</title>
        <authorList>
            <person name="Bian Y."/>
            <person name="Song C."/>
            <person name="Cheng K."/>
            <person name="Dong M."/>
            <person name="Wang F."/>
            <person name="Huang J."/>
            <person name="Sun D."/>
            <person name="Wang L."/>
            <person name="Ye M."/>
            <person name="Zou H."/>
        </authorList>
    </citation>
    <scope>PHOSPHORYLATION [LARGE SCALE ANALYSIS] AT THR-988; THR-1309; SER-1328; SER-1711 AND SER-1713</scope>
    <scope>IDENTIFICATION BY MASS SPECTROMETRY [LARGE SCALE ANALYSIS]</scope>
    <source>
        <tissue>Liver</tissue>
    </source>
</reference>
<reference key="16">
    <citation type="journal article" date="2017" name="J. Neurosci.">
        <title>Mutation Disrupts Dendritic Morphology and Synaptic Transmission, and Causes ASD-Related Behaviors.</title>
        <authorList>
            <person name="Stephenson J.R."/>
            <person name="Wang X."/>
            <person name="Perfitt T.L."/>
            <person name="Parrish W.P."/>
            <person name="Shonesy B.C."/>
            <person name="Marks C.R."/>
            <person name="Mortlock D.P."/>
            <person name="Nakagawa T."/>
            <person name="Sutcliffe J.S."/>
            <person name="Colbran R.J."/>
        </authorList>
    </citation>
    <scope>INTERACTION WITH CAMK2A</scope>
</reference>
<reference key="17">
    <citation type="journal article" date="2007" name="Am. J. Hum. Genet.">
        <title>Contribution of SHANK3 mutations to autism spectrum disorder.</title>
        <authorList>
            <person name="Moessner R."/>
            <person name="Marshall C.R."/>
            <person name="Sutcliffe J.S."/>
            <person name="Skaug J."/>
            <person name="Pinto D."/>
            <person name="Vincent J."/>
            <person name="Zwaigenbaum L."/>
            <person name="Fernandez B."/>
            <person name="Roberts W."/>
            <person name="Szatmari P."/>
            <person name="Scherer S.W."/>
        </authorList>
    </citation>
    <scope>VARIANTS ARG-396; LEU-416; SER-1045; THR-1248; LEU-1338; VAL-1481; THR-1518; SER-1632 AND THR-1729</scope>
    <scope>INVOLVEMENT IN NEUROPSYCHIATRIC DISORDERS</scope>
</reference>
<reference key="18">
    <citation type="journal article" date="2007" name="Nat. Genet.">
        <title>Mutations in the gene encoding the synaptic scaffolding protein SHANK3 are associated with autism spectrum disorders.</title>
        <authorList>
            <person name="Durand C.M."/>
            <person name="Betancur C."/>
            <person name="Boeckers T.M."/>
            <person name="Bockmann J."/>
            <person name="Chaste P."/>
            <person name="Fauchereau F."/>
            <person name="Nygren G."/>
            <person name="Rastam M."/>
            <person name="Gillberg I.C."/>
            <person name="Anckarsaeter H."/>
            <person name="Sponheim E."/>
            <person name="Goubran-Botros H."/>
            <person name="Delorme R."/>
            <person name="Chabane N."/>
            <person name="Mouren-Simeoni M.-C."/>
            <person name="de Mas P."/>
            <person name="Bieth E."/>
            <person name="Roge B."/>
            <person name="Heron D."/>
            <person name="Burglen L."/>
            <person name="Gillberg C."/>
            <person name="Leboyer M."/>
            <person name="Bourgeron T."/>
        </authorList>
    </citation>
    <scope>VARIANTS CYS-87; GLY-273; THR-299; CYS-375; GLY-1038; VAL-1086; HIS-1306; GLY-1641 AND THR-1729</scope>
    <scope>INVOLVEMENT IN NEUROPSYCHIATRIC DISORDERS</scope>
    <scope>CHARACTERIZATION OF VARIANTS CYS-87 AND CYS-375</scope>
</reference>
<reference key="19">
    <citation type="journal article" date="2010" name="Proc. Natl. Acad. Sci. U.S.A.">
        <title>De novo mutations in the gene encoding the synaptic scaffolding protein SHANK3 in patients ascertained for schizophrenia.</title>
        <authorList>
            <person name="Gauthier J."/>
            <person name="Champagne N."/>
            <person name="Lafreniere R.G."/>
            <person name="Xiong L."/>
            <person name="Spiegelman D."/>
            <person name="Brustein E."/>
            <person name="Lapointe M."/>
            <person name="Peng H."/>
            <person name="Cote M."/>
            <person name="Noreau A."/>
            <person name="Hamdan F.F."/>
            <person name="Addington A.M."/>
            <person name="Rapoport J.L."/>
            <person name="Delisi L.E."/>
            <person name="Krebs M.O."/>
            <person name="Joober R."/>
            <person name="Fathalli F."/>
            <person name="Mouaffak F."/>
            <person name="Haghighi A.P."/>
            <person name="Neri C."/>
            <person name="Dube M.P."/>
            <person name="Samuels M.E."/>
            <person name="Marineau C."/>
            <person name="Stone E.A."/>
            <person name="Awadalla P."/>
            <person name="Barker P.A."/>
            <person name="Carbonetto S."/>
            <person name="Drapeau P."/>
            <person name="Rouleau G.A."/>
        </authorList>
    </citation>
    <scope>VARIANT SCZD15 TRP-611</scope>
    <scope>VARIANTS THR-320; GLN-568; THR-795; THR-1027; VAL-1085; LYS-1373; GLY-1408; VAL-1621 AND THR-1720</scope>
</reference>
<reference key="20">
    <citation type="journal article" date="2013" name="Eur. J. Hum. Genet.">
        <title>Prevalence of SHANK3 variants in patients with different subtypes of autism spectrum disorders.</title>
        <authorList>
            <person name="Boccuto L."/>
            <person name="Lauri M."/>
            <person name="Sarasua S.M."/>
            <person name="Skinner C.D."/>
            <person name="Buccella D."/>
            <person name="Dwivedi A."/>
            <person name="Orteschi D."/>
            <person name="Collins J.S."/>
            <person name="Zollino M."/>
            <person name="Visconti P."/>
            <person name="Dupont B."/>
            <person name="Tiziano D."/>
            <person name="Schroer R.J."/>
            <person name="Neri G."/>
            <person name="Stevenson R.E."/>
            <person name="Gurrieri F."/>
            <person name="Schwartz C.E."/>
        </authorList>
    </citation>
    <scope>VARIANTS PHMDS ALA-216 AND SER-1527</scope>
</reference>
<accession>Q9BYB0</accession>
<accession>A0AAG2UY11</accession>
<accession>D7UT47</accession>
<accession>Q8TET3</accession>
<name>SHAN3_HUMAN</name>